<feature type="signal peptide" evidence="6">
    <location>
        <begin position="1"/>
        <end position="18"/>
    </location>
</feature>
<feature type="chain" id="PRO_5003675915" description="Proapolipoprotein A-I">
    <location>
        <begin position="19"/>
        <end position="264"/>
    </location>
</feature>
<feature type="chain" id="PRO_0000450140" description="Apolipoprotein A-I">
    <location>
        <begin position="25"/>
        <end position="264"/>
    </location>
</feature>
<feature type="chain" id="PRO_0000450141" description="Truncated apolipoprotein A-I" evidence="3">
    <location>
        <begin position="25"/>
        <end position="263"/>
    </location>
</feature>
<feature type="repeat" description="1">
    <location>
        <begin position="67"/>
        <end position="88"/>
    </location>
</feature>
<feature type="repeat" description="2">
    <location>
        <begin position="89"/>
        <end position="110"/>
    </location>
</feature>
<feature type="repeat" description="3; half-length">
    <location>
        <begin position="111"/>
        <end position="121"/>
    </location>
</feature>
<feature type="repeat" description="4">
    <location>
        <begin position="122"/>
        <end position="143"/>
    </location>
</feature>
<feature type="repeat" description="5">
    <location>
        <begin position="144"/>
        <end position="165"/>
    </location>
</feature>
<feature type="repeat" description="6">
    <location>
        <begin position="166"/>
        <end position="187"/>
    </location>
</feature>
<feature type="repeat" description="7; truncated">
    <location>
        <begin position="188"/>
        <end position="207"/>
    </location>
</feature>
<feature type="repeat" description="8">
    <location>
        <begin position="208"/>
        <end position="229"/>
    </location>
</feature>
<feature type="repeat" description="9; half-length">
    <location>
        <begin position="230"/>
        <end position="240"/>
    </location>
</feature>
<feature type="repeat" description="10">
    <location>
        <begin position="241"/>
        <end position="264"/>
    </location>
</feature>
<feature type="region of interest" description="10 X approximate tandem repeats">
    <location>
        <begin position="67"/>
        <end position="264"/>
    </location>
</feature>
<feature type="modified residue" description="Methionine sulfoxide" evidence="3">
    <location>
        <position position="109"/>
    </location>
</feature>
<evidence type="ECO:0000250" key="1"/>
<evidence type="ECO:0000250" key="2">
    <source>
        <dbReference type="UniProtKB" id="G5BQH5"/>
    </source>
</evidence>
<evidence type="ECO:0000250" key="3">
    <source>
        <dbReference type="UniProtKB" id="P02647"/>
    </source>
</evidence>
<evidence type="ECO:0000250" key="4">
    <source>
        <dbReference type="UniProtKB" id="P02648"/>
    </source>
</evidence>
<evidence type="ECO:0000250" key="5">
    <source>
        <dbReference type="UniProtKB" id="P04639"/>
    </source>
</evidence>
<evidence type="ECO:0000255" key="6"/>
<evidence type="ECO:0000305" key="7"/>
<gene>
    <name type="primary">APOA1</name>
</gene>
<proteinExistence type="inferred from homology"/>
<comment type="function">
    <text evidence="3">Participates in the reverse transport of cholesterol from tissues to the liver for excretion by promoting cholesterol efflux from tissues and by acting as a cofactor for the lecithin cholesterol acyltransferase (LCAT). As part of the SPAP complex, activates spermatozoa motility.</text>
</comment>
<comment type="subunit">
    <text evidence="2 3 5">Homodimer (By similarity). Interacts with APOA1BP and CLU. Component of a sperm activating protein complex (SPAP), consisting of APOA1, an immunoglobulin heavy chain, an immunoglobulin light chain and albumin. Interacts with NDRG1. Interacts with SCGB3A2 (By similarity). Interacts with NAXE and YJEFN3 (By similarity).</text>
</comment>
<comment type="subcellular location">
    <subcellularLocation>
        <location evidence="3">Secreted</location>
    </subcellularLocation>
</comment>
<comment type="PTM">
    <text evidence="4">Glycosylated.</text>
</comment>
<comment type="PTM">
    <text evidence="4">Palmitoylated.</text>
</comment>
<comment type="PTM">
    <text evidence="1">Phosphorylation sites are present in the extracellular medium.</text>
</comment>
<comment type="similarity">
    <text evidence="7">Belongs to the apolipoprotein A1/A4/E family.</text>
</comment>
<protein>
    <recommendedName>
        <fullName>Apolipoprotein A-I</fullName>
        <shortName>Apo-AI</shortName>
        <shortName>ApoA-I</shortName>
    </recommendedName>
    <component>
        <recommendedName>
            <fullName>Proapolipoprotein A-I</fullName>
            <shortName>ProapoA-I</shortName>
        </recommendedName>
    </component>
    <component>
        <recommendedName>
            <fullName>Truncated apolipoprotein A-I</fullName>
        </recommendedName>
    </component>
</protein>
<sequence>MKAVVLTVAVLFLTGSQARHFWQQDEPQSSWDRIKDFATVYLDAVKDSGRDYVTQFETSALGKQLNLKLLDNWDSLSSTVSKVREQIGPVSQDFWDKLEKDTVSLRQEMNKDLEEVKRKVQPYLDEFQKRWQEDVERYRQQVEPLSKELREGARQKLLELHEKLSPLGQEMRDRARTHVDALRTHLAPYSDELRQRLAARLEALKEGSSFAEYQAKATEHLSALGEKAKPALEDLRQGLLPVLESLKLSFWSAVDEATKKLNTQ</sequence>
<name>APOA1_ICTTR</name>
<reference key="1">
    <citation type="submission" date="2011-11" db="EMBL/GenBank/DDBJ databases">
        <title>The Draft Genome of Spermophilus tridecemlineatus.</title>
        <authorList>
            <person name="Di Palma F."/>
            <person name="Alfoldi J."/>
            <person name="Johnson J."/>
            <person name="Berlin A."/>
            <person name="Gnerre S."/>
            <person name="Jaffe D."/>
            <person name="MacCallum I."/>
            <person name="Young S."/>
            <person name="Walker B.J."/>
            <person name="Lindblad-Toh K."/>
        </authorList>
    </citation>
    <scope>NUCLEOTIDE SEQUENCE [LARGE SCALE GENOMIC DNA]</scope>
</reference>
<accession>I3M072</accession>
<dbReference type="EMBL" id="AGTP01052890">
    <property type="status" value="NOT_ANNOTATED_CDS"/>
    <property type="molecule type" value="Genomic_DNA"/>
</dbReference>
<dbReference type="RefSeq" id="XP_005328349.1">
    <property type="nucleotide sequence ID" value="XM_005328292.2"/>
</dbReference>
<dbReference type="SMR" id="I3M072"/>
<dbReference type="STRING" id="43179.ENSSTOP00000002077"/>
<dbReference type="Ensembl" id="ENSSTOT00000002322.3">
    <property type="protein sequence ID" value="ENSSTOP00000002077.2"/>
    <property type="gene ID" value="ENSSTOG00000002328.3"/>
</dbReference>
<dbReference type="eggNOG" id="ENOG502S1XQ">
    <property type="taxonomic scope" value="Eukaryota"/>
</dbReference>
<dbReference type="GeneTree" id="ENSGT00950000182929"/>
<dbReference type="HOGENOM" id="CLU_058447_1_0_1"/>
<dbReference type="InParanoid" id="I3M072"/>
<dbReference type="OMA" id="EYVAQFE"/>
<dbReference type="OrthoDB" id="8727817at2759"/>
<dbReference type="TreeFam" id="TF334458"/>
<dbReference type="Proteomes" id="UP000005215">
    <property type="component" value="Unassembled WGS sequence"/>
</dbReference>
<dbReference type="GO" id="GO:0042627">
    <property type="term" value="C:chylomicron"/>
    <property type="evidence" value="ECO:0007669"/>
    <property type="project" value="TreeGrafter"/>
</dbReference>
<dbReference type="GO" id="GO:0030139">
    <property type="term" value="C:endocytic vesicle"/>
    <property type="evidence" value="ECO:0007669"/>
    <property type="project" value="Ensembl"/>
</dbReference>
<dbReference type="GO" id="GO:1903561">
    <property type="term" value="C:extracellular vesicle"/>
    <property type="evidence" value="ECO:0007669"/>
    <property type="project" value="TreeGrafter"/>
</dbReference>
<dbReference type="GO" id="GO:0034362">
    <property type="term" value="C:low-density lipoprotein particle"/>
    <property type="evidence" value="ECO:0007669"/>
    <property type="project" value="TreeGrafter"/>
</dbReference>
<dbReference type="GO" id="GO:0034366">
    <property type="term" value="C:spherical high-density lipoprotein particle"/>
    <property type="evidence" value="ECO:0007669"/>
    <property type="project" value="Ensembl"/>
</dbReference>
<dbReference type="GO" id="GO:0034361">
    <property type="term" value="C:very-low-density lipoprotein particle"/>
    <property type="evidence" value="ECO:0007669"/>
    <property type="project" value="Ensembl"/>
</dbReference>
<dbReference type="GO" id="GO:0001540">
    <property type="term" value="F:amyloid-beta binding"/>
    <property type="evidence" value="ECO:0007669"/>
    <property type="project" value="Ensembl"/>
</dbReference>
<dbReference type="GO" id="GO:0034191">
    <property type="term" value="F:apolipoprotein A-I receptor binding"/>
    <property type="evidence" value="ECO:0007669"/>
    <property type="project" value="Ensembl"/>
</dbReference>
<dbReference type="GO" id="GO:0045499">
    <property type="term" value="F:chemorepellent activity"/>
    <property type="evidence" value="ECO:0007669"/>
    <property type="project" value="Ensembl"/>
</dbReference>
<dbReference type="GO" id="GO:0015485">
    <property type="term" value="F:cholesterol binding"/>
    <property type="evidence" value="ECO:0007669"/>
    <property type="project" value="Ensembl"/>
</dbReference>
<dbReference type="GO" id="GO:0120020">
    <property type="term" value="F:cholesterol transfer activity"/>
    <property type="evidence" value="ECO:0007669"/>
    <property type="project" value="Ensembl"/>
</dbReference>
<dbReference type="GO" id="GO:0019899">
    <property type="term" value="F:enzyme binding"/>
    <property type="evidence" value="ECO:0007669"/>
    <property type="project" value="Ensembl"/>
</dbReference>
<dbReference type="GO" id="GO:0031072">
    <property type="term" value="F:heat shock protein binding"/>
    <property type="evidence" value="ECO:0007669"/>
    <property type="project" value="Ensembl"/>
</dbReference>
<dbReference type="GO" id="GO:0008035">
    <property type="term" value="F:high-density lipoprotein particle binding"/>
    <property type="evidence" value="ECO:0007669"/>
    <property type="project" value="Ensembl"/>
</dbReference>
<dbReference type="GO" id="GO:0070653">
    <property type="term" value="F:high-density lipoprotein particle receptor binding"/>
    <property type="evidence" value="ECO:0007669"/>
    <property type="project" value="Ensembl"/>
</dbReference>
<dbReference type="GO" id="GO:0060228">
    <property type="term" value="F:phosphatidylcholine-sterol O-acyltransferase activator activity"/>
    <property type="evidence" value="ECO:0007669"/>
    <property type="project" value="Ensembl"/>
</dbReference>
<dbReference type="GO" id="GO:0005543">
    <property type="term" value="F:phospholipid binding"/>
    <property type="evidence" value="ECO:0007669"/>
    <property type="project" value="Ensembl"/>
</dbReference>
<dbReference type="GO" id="GO:0042803">
    <property type="term" value="F:protein homodimerization activity"/>
    <property type="evidence" value="ECO:0000250"/>
    <property type="project" value="UniProtKB"/>
</dbReference>
<dbReference type="GO" id="GO:0030325">
    <property type="term" value="P:adrenal gland development"/>
    <property type="evidence" value="ECO:0007669"/>
    <property type="project" value="Ensembl"/>
</dbReference>
<dbReference type="GO" id="GO:0034205">
    <property type="term" value="P:amyloid-beta formation"/>
    <property type="evidence" value="ECO:0007669"/>
    <property type="project" value="Ensembl"/>
</dbReference>
<dbReference type="GO" id="GO:0043534">
    <property type="term" value="P:blood vessel endothelial cell migration"/>
    <property type="evidence" value="ECO:0007669"/>
    <property type="project" value="Ensembl"/>
</dbReference>
<dbReference type="GO" id="GO:0071402">
    <property type="term" value="P:cellular response to lipoprotein particle stimulus"/>
    <property type="evidence" value="ECO:0007669"/>
    <property type="project" value="Ensembl"/>
</dbReference>
<dbReference type="GO" id="GO:0006695">
    <property type="term" value="P:cholesterol biosynthetic process"/>
    <property type="evidence" value="ECO:0007669"/>
    <property type="project" value="Ensembl"/>
</dbReference>
<dbReference type="GO" id="GO:0033344">
    <property type="term" value="P:cholesterol efflux"/>
    <property type="evidence" value="ECO:0007669"/>
    <property type="project" value="Ensembl"/>
</dbReference>
<dbReference type="GO" id="GO:0042632">
    <property type="term" value="P:cholesterol homeostasis"/>
    <property type="evidence" value="ECO:0007669"/>
    <property type="project" value="Ensembl"/>
</dbReference>
<dbReference type="GO" id="GO:0070508">
    <property type="term" value="P:cholesterol import"/>
    <property type="evidence" value="ECO:0007669"/>
    <property type="project" value="Ensembl"/>
</dbReference>
<dbReference type="GO" id="GO:0001935">
    <property type="term" value="P:endothelial cell proliferation"/>
    <property type="evidence" value="ECO:0007669"/>
    <property type="project" value="Ensembl"/>
</dbReference>
<dbReference type="GO" id="GO:0007186">
    <property type="term" value="P:G protein-coupled receptor signaling pathway"/>
    <property type="evidence" value="ECO:0007669"/>
    <property type="project" value="Ensembl"/>
</dbReference>
<dbReference type="GO" id="GO:0008211">
    <property type="term" value="P:glucocorticoid metabolic process"/>
    <property type="evidence" value="ECO:0007669"/>
    <property type="project" value="Ensembl"/>
</dbReference>
<dbReference type="GO" id="GO:0034380">
    <property type="term" value="P:high-density lipoprotein particle assembly"/>
    <property type="evidence" value="ECO:0007669"/>
    <property type="project" value="Ensembl"/>
</dbReference>
<dbReference type="GO" id="GO:0034375">
    <property type="term" value="P:high-density lipoprotein particle remodeling"/>
    <property type="evidence" value="ECO:0007669"/>
    <property type="project" value="Ensembl"/>
</dbReference>
<dbReference type="GO" id="GO:0007229">
    <property type="term" value="P:integrin-mediated signaling pathway"/>
    <property type="evidence" value="ECO:0007669"/>
    <property type="project" value="Ensembl"/>
</dbReference>
<dbReference type="GO" id="GO:0019915">
    <property type="term" value="P:lipid storage"/>
    <property type="evidence" value="ECO:0007669"/>
    <property type="project" value="Ensembl"/>
</dbReference>
<dbReference type="GO" id="GO:0042158">
    <property type="term" value="P:lipoprotein biosynthetic process"/>
    <property type="evidence" value="ECO:0007669"/>
    <property type="project" value="Ensembl"/>
</dbReference>
<dbReference type="GO" id="GO:0060354">
    <property type="term" value="P:negative regulation of cell adhesion molecule production"/>
    <property type="evidence" value="ECO:0007669"/>
    <property type="project" value="Ensembl"/>
</dbReference>
<dbReference type="GO" id="GO:0002719">
    <property type="term" value="P:negative regulation of cytokine production involved in immune response"/>
    <property type="evidence" value="ECO:0007669"/>
    <property type="project" value="Ensembl"/>
</dbReference>
<dbReference type="GO" id="GO:0034115">
    <property type="term" value="P:negative regulation of heterotypic cell-cell adhesion"/>
    <property type="evidence" value="ECO:0007669"/>
    <property type="project" value="Ensembl"/>
</dbReference>
<dbReference type="GO" id="GO:0050728">
    <property type="term" value="P:negative regulation of inflammatory response"/>
    <property type="evidence" value="ECO:0007669"/>
    <property type="project" value="Ensembl"/>
</dbReference>
<dbReference type="GO" id="GO:0032691">
    <property type="term" value="P:negative regulation of interleukin-1 beta production"/>
    <property type="evidence" value="ECO:0007669"/>
    <property type="project" value="Ensembl"/>
</dbReference>
<dbReference type="GO" id="GO:0010804">
    <property type="term" value="P:negative regulation of tumor necrosis factor-mediated signaling pathway"/>
    <property type="evidence" value="ECO:0007669"/>
    <property type="project" value="Ensembl"/>
</dbReference>
<dbReference type="GO" id="GO:0010903">
    <property type="term" value="P:negative regulation of very-low-density lipoprotein particle remodeling"/>
    <property type="evidence" value="ECO:0007669"/>
    <property type="project" value="Ensembl"/>
</dbReference>
<dbReference type="GO" id="GO:0006656">
    <property type="term" value="P:phosphatidylcholine biosynthetic process"/>
    <property type="evidence" value="ECO:0007669"/>
    <property type="project" value="Ensembl"/>
</dbReference>
<dbReference type="GO" id="GO:0033700">
    <property type="term" value="P:phospholipid efflux"/>
    <property type="evidence" value="ECO:0007669"/>
    <property type="project" value="Ensembl"/>
</dbReference>
<dbReference type="GO" id="GO:0055091">
    <property type="term" value="P:phospholipid homeostasis"/>
    <property type="evidence" value="ECO:0007669"/>
    <property type="project" value="Ensembl"/>
</dbReference>
<dbReference type="GO" id="GO:0010875">
    <property type="term" value="P:positive regulation of cholesterol efflux"/>
    <property type="evidence" value="ECO:0007669"/>
    <property type="project" value="Ensembl"/>
</dbReference>
<dbReference type="GO" id="GO:0090205">
    <property type="term" value="P:positive regulation of cholesterol metabolic process"/>
    <property type="evidence" value="ECO:0007669"/>
    <property type="project" value="Ensembl"/>
</dbReference>
<dbReference type="GO" id="GO:0050766">
    <property type="term" value="P:positive regulation of phagocytosis"/>
    <property type="evidence" value="ECO:0007669"/>
    <property type="project" value="Ensembl"/>
</dbReference>
<dbReference type="GO" id="GO:1902995">
    <property type="term" value="P:positive regulation of phospholipid efflux"/>
    <property type="evidence" value="ECO:0007669"/>
    <property type="project" value="Ensembl"/>
</dbReference>
<dbReference type="GO" id="GO:0035025">
    <property type="term" value="P:positive regulation of Rho protein signal transduction"/>
    <property type="evidence" value="ECO:0007669"/>
    <property type="project" value="Ensembl"/>
</dbReference>
<dbReference type="GO" id="GO:0051496">
    <property type="term" value="P:positive regulation of stress fiber assembly"/>
    <property type="evidence" value="ECO:0007669"/>
    <property type="project" value="Ensembl"/>
</dbReference>
<dbReference type="GO" id="GO:1900026">
    <property type="term" value="P:positive regulation of substrate adhesion-dependent cell spreading"/>
    <property type="evidence" value="ECO:0007669"/>
    <property type="project" value="Ensembl"/>
</dbReference>
<dbReference type="GO" id="GO:0050821">
    <property type="term" value="P:protein stabilization"/>
    <property type="evidence" value="ECO:0007669"/>
    <property type="project" value="Ensembl"/>
</dbReference>
<dbReference type="GO" id="GO:0032489">
    <property type="term" value="P:regulation of Cdc42 protein signal transduction"/>
    <property type="evidence" value="ECO:0007669"/>
    <property type="project" value="Ensembl"/>
</dbReference>
<dbReference type="GO" id="GO:0030300">
    <property type="term" value="P:regulation of intestinal cholesterol absorption"/>
    <property type="evidence" value="ECO:0007669"/>
    <property type="project" value="Ensembl"/>
</dbReference>
<dbReference type="GO" id="GO:0043691">
    <property type="term" value="P:reverse cholesterol transport"/>
    <property type="evidence" value="ECO:0007669"/>
    <property type="project" value="Ensembl"/>
</dbReference>
<dbReference type="GO" id="GO:0070328">
    <property type="term" value="P:triglyceride homeostasis"/>
    <property type="evidence" value="ECO:0007669"/>
    <property type="project" value="Ensembl"/>
</dbReference>
<dbReference type="GO" id="GO:0051180">
    <property type="term" value="P:vitamin transport"/>
    <property type="evidence" value="ECO:0007669"/>
    <property type="project" value="Ensembl"/>
</dbReference>
<dbReference type="FunFam" id="1.20.120.20:FF:000001">
    <property type="entry name" value="Apolipoprotein A-I"/>
    <property type="match status" value="1"/>
</dbReference>
<dbReference type="FunFam" id="1.20.5.20:FF:000001">
    <property type="entry name" value="apolipoprotein A-I"/>
    <property type="match status" value="1"/>
</dbReference>
<dbReference type="Gene3D" id="1.20.5.20">
    <property type="match status" value="1"/>
</dbReference>
<dbReference type="Gene3D" id="6.10.140.380">
    <property type="match status" value="1"/>
</dbReference>
<dbReference type="Gene3D" id="1.20.120.20">
    <property type="entry name" value="Apolipoprotein"/>
    <property type="match status" value="1"/>
</dbReference>
<dbReference type="InterPro" id="IPR000074">
    <property type="entry name" value="ApoA_E"/>
</dbReference>
<dbReference type="InterPro" id="IPR050163">
    <property type="entry name" value="Apolipoprotein_A1/A4/E"/>
</dbReference>
<dbReference type="PANTHER" id="PTHR18976">
    <property type="entry name" value="APOLIPOPROTEIN"/>
    <property type="match status" value="1"/>
</dbReference>
<dbReference type="PANTHER" id="PTHR18976:SF11">
    <property type="entry name" value="APOLIPOPROTEIN A-I"/>
    <property type="match status" value="1"/>
</dbReference>
<dbReference type="Pfam" id="PF01442">
    <property type="entry name" value="Apolipoprotein"/>
    <property type="match status" value="1"/>
</dbReference>
<dbReference type="SUPFAM" id="SSF58113">
    <property type="entry name" value="Apolipoprotein A-I"/>
    <property type="match status" value="1"/>
</dbReference>
<keyword id="KW-0153">Cholesterol metabolism</keyword>
<keyword id="KW-0325">Glycoprotein</keyword>
<keyword id="KW-0345">HDL</keyword>
<keyword id="KW-0443">Lipid metabolism</keyword>
<keyword id="KW-0445">Lipid transport</keyword>
<keyword id="KW-0449">Lipoprotein</keyword>
<keyword id="KW-0558">Oxidation</keyword>
<keyword id="KW-0564">Palmitate</keyword>
<keyword id="KW-0597">Phosphoprotein</keyword>
<keyword id="KW-1185">Reference proteome</keyword>
<keyword id="KW-0677">Repeat</keyword>
<keyword id="KW-0964">Secreted</keyword>
<keyword id="KW-0732">Signal</keyword>
<keyword id="KW-0753">Steroid metabolism</keyword>
<keyword id="KW-1207">Sterol metabolism</keyword>
<keyword id="KW-0813">Transport</keyword>
<organism>
    <name type="scientific">Ictidomys tridecemlineatus</name>
    <name type="common">Thirteen-lined ground squirrel</name>
    <name type="synonym">Spermophilus tridecemlineatus</name>
    <dbReference type="NCBI Taxonomy" id="43179"/>
    <lineage>
        <taxon>Eukaryota</taxon>
        <taxon>Metazoa</taxon>
        <taxon>Chordata</taxon>
        <taxon>Craniata</taxon>
        <taxon>Vertebrata</taxon>
        <taxon>Euteleostomi</taxon>
        <taxon>Mammalia</taxon>
        <taxon>Eutheria</taxon>
        <taxon>Euarchontoglires</taxon>
        <taxon>Glires</taxon>
        <taxon>Rodentia</taxon>
        <taxon>Sciuromorpha</taxon>
        <taxon>Sciuridae</taxon>
        <taxon>Xerinae</taxon>
        <taxon>Marmotini</taxon>
        <taxon>Ictidomys</taxon>
    </lineage>
</organism>